<accession>Q48C90</accession>
<proteinExistence type="inferred from homology"/>
<comment type="function">
    <text evidence="1">One of the proteins required for the normal export of preproteins out of the cell cytoplasm. It is a molecular chaperone that binds to a subset of precursor proteins, maintaining them in a translocation-competent state. It also specifically binds to its receptor SecA.</text>
</comment>
<comment type="subunit">
    <text evidence="1">Homotetramer, a dimer of dimers. One homotetramer interacts with 1 SecA dimer.</text>
</comment>
<comment type="subcellular location">
    <subcellularLocation>
        <location evidence="1">Cytoplasm</location>
    </subcellularLocation>
</comment>
<comment type="similarity">
    <text evidence="1">Belongs to the SecB family.</text>
</comment>
<sequence>MTDQPNNGAVANEENGPQFSLQRIYVRDLSFEAPKSPAIFRQEWTPTVSLDLNTRQKQLEGDFYEVVLTLSVTVNNGDEVAFIVEVQQAGIFLIKGLDDGAMSHTLGAFCPNILFPYAREAIDNLVVRGSFPALMLAPVNFDALYAQELQRMQEAGETPTVQ</sequence>
<organism>
    <name type="scientific">Pseudomonas savastanoi pv. phaseolicola (strain 1448A / Race 6)</name>
    <name type="common">Pseudomonas syringae pv. phaseolicola (strain 1448A / Race 6)</name>
    <dbReference type="NCBI Taxonomy" id="264730"/>
    <lineage>
        <taxon>Bacteria</taxon>
        <taxon>Pseudomonadati</taxon>
        <taxon>Pseudomonadota</taxon>
        <taxon>Gammaproteobacteria</taxon>
        <taxon>Pseudomonadales</taxon>
        <taxon>Pseudomonadaceae</taxon>
        <taxon>Pseudomonas</taxon>
    </lineage>
</organism>
<name>SECB_PSE14</name>
<evidence type="ECO:0000255" key="1">
    <source>
        <dbReference type="HAMAP-Rule" id="MF_00821"/>
    </source>
</evidence>
<dbReference type="EMBL" id="CP000058">
    <property type="protein sequence ID" value="AAZ33300.1"/>
    <property type="molecule type" value="Genomic_DNA"/>
</dbReference>
<dbReference type="RefSeq" id="WP_002551468.1">
    <property type="nucleotide sequence ID" value="NC_005773.3"/>
</dbReference>
<dbReference type="SMR" id="Q48C90"/>
<dbReference type="GeneID" id="96221377"/>
<dbReference type="KEGG" id="psp:PSPPH_4913"/>
<dbReference type="eggNOG" id="COG1952">
    <property type="taxonomic scope" value="Bacteria"/>
</dbReference>
<dbReference type="HOGENOM" id="CLU_111574_1_0_6"/>
<dbReference type="Proteomes" id="UP000000551">
    <property type="component" value="Chromosome"/>
</dbReference>
<dbReference type="GO" id="GO:0005737">
    <property type="term" value="C:cytoplasm"/>
    <property type="evidence" value="ECO:0007669"/>
    <property type="project" value="UniProtKB-SubCell"/>
</dbReference>
<dbReference type="GO" id="GO:0051082">
    <property type="term" value="F:unfolded protein binding"/>
    <property type="evidence" value="ECO:0007669"/>
    <property type="project" value="InterPro"/>
</dbReference>
<dbReference type="GO" id="GO:0006457">
    <property type="term" value="P:protein folding"/>
    <property type="evidence" value="ECO:0007669"/>
    <property type="project" value="UniProtKB-UniRule"/>
</dbReference>
<dbReference type="GO" id="GO:0051262">
    <property type="term" value="P:protein tetramerization"/>
    <property type="evidence" value="ECO:0007669"/>
    <property type="project" value="InterPro"/>
</dbReference>
<dbReference type="GO" id="GO:0015031">
    <property type="term" value="P:protein transport"/>
    <property type="evidence" value="ECO:0007669"/>
    <property type="project" value="UniProtKB-UniRule"/>
</dbReference>
<dbReference type="Gene3D" id="3.10.420.10">
    <property type="entry name" value="SecB-like"/>
    <property type="match status" value="1"/>
</dbReference>
<dbReference type="HAMAP" id="MF_00821">
    <property type="entry name" value="SecB"/>
    <property type="match status" value="1"/>
</dbReference>
<dbReference type="InterPro" id="IPR003708">
    <property type="entry name" value="SecB"/>
</dbReference>
<dbReference type="InterPro" id="IPR035958">
    <property type="entry name" value="SecB-like_sf"/>
</dbReference>
<dbReference type="NCBIfam" id="NF004393">
    <property type="entry name" value="PRK05751.1-4"/>
    <property type="match status" value="1"/>
</dbReference>
<dbReference type="NCBIfam" id="TIGR00809">
    <property type="entry name" value="secB"/>
    <property type="match status" value="1"/>
</dbReference>
<dbReference type="PANTHER" id="PTHR36918">
    <property type="match status" value="1"/>
</dbReference>
<dbReference type="PANTHER" id="PTHR36918:SF1">
    <property type="entry name" value="PROTEIN-EXPORT PROTEIN SECB"/>
    <property type="match status" value="1"/>
</dbReference>
<dbReference type="Pfam" id="PF02556">
    <property type="entry name" value="SecB"/>
    <property type="match status" value="1"/>
</dbReference>
<dbReference type="PRINTS" id="PR01594">
    <property type="entry name" value="SECBCHAPRONE"/>
</dbReference>
<dbReference type="SUPFAM" id="SSF54611">
    <property type="entry name" value="SecB-like"/>
    <property type="match status" value="1"/>
</dbReference>
<protein>
    <recommendedName>
        <fullName evidence="1">Protein-export protein SecB</fullName>
    </recommendedName>
</protein>
<feature type="chain" id="PRO_0000055399" description="Protein-export protein SecB">
    <location>
        <begin position="1"/>
        <end position="162"/>
    </location>
</feature>
<reference key="1">
    <citation type="journal article" date="2005" name="J. Bacteriol.">
        <title>Whole-genome sequence analysis of Pseudomonas syringae pv. phaseolicola 1448A reveals divergence among pathovars in genes involved in virulence and transposition.</title>
        <authorList>
            <person name="Joardar V."/>
            <person name="Lindeberg M."/>
            <person name="Jackson R.W."/>
            <person name="Selengut J."/>
            <person name="Dodson R."/>
            <person name="Brinkac L.M."/>
            <person name="Daugherty S.C."/>
            <person name="DeBoy R.T."/>
            <person name="Durkin A.S."/>
            <person name="Gwinn Giglio M."/>
            <person name="Madupu R."/>
            <person name="Nelson W.C."/>
            <person name="Rosovitz M.J."/>
            <person name="Sullivan S.A."/>
            <person name="Crabtree J."/>
            <person name="Creasy T."/>
            <person name="Davidsen T.M."/>
            <person name="Haft D.H."/>
            <person name="Zafar N."/>
            <person name="Zhou L."/>
            <person name="Halpin R."/>
            <person name="Holley T."/>
            <person name="Khouri H.M."/>
            <person name="Feldblyum T.V."/>
            <person name="White O."/>
            <person name="Fraser C.M."/>
            <person name="Chatterjee A.K."/>
            <person name="Cartinhour S."/>
            <person name="Schneider D."/>
            <person name="Mansfield J.W."/>
            <person name="Collmer A."/>
            <person name="Buell R."/>
        </authorList>
    </citation>
    <scope>NUCLEOTIDE SEQUENCE [LARGE SCALE GENOMIC DNA]</scope>
    <source>
        <strain>1448A / Race 6</strain>
    </source>
</reference>
<keyword id="KW-0143">Chaperone</keyword>
<keyword id="KW-0963">Cytoplasm</keyword>
<keyword id="KW-0653">Protein transport</keyword>
<keyword id="KW-0811">Translocation</keyword>
<keyword id="KW-0813">Transport</keyword>
<gene>
    <name evidence="1" type="primary">secB</name>
    <name type="ordered locus">PSPPH_4913</name>
</gene>